<sequence length="137" mass="15472">MKLKVKIAIPGKVVWENEVDEVNIQTTTGKIGILPNHAPIIATVETSVLRMKSDESQNPILMVISDGYLSLEKNSIFIATDRCILEDNINASKLEEDYKTALERYNNAEKPGKKYIANKALKRINACYEILSYRNND</sequence>
<keyword id="KW-0066">ATP synthesis</keyword>
<keyword id="KW-0139">CF(1)</keyword>
<keyword id="KW-0150">Chloroplast</keyword>
<keyword id="KW-0375">Hydrogen ion transport</keyword>
<keyword id="KW-0406">Ion transport</keyword>
<keyword id="KW-0472">Membrane</keyword>
<keyword id="KW-0934">Plastid</keyword>
<keyword id="KW-0793">Thylakoid</keyword>
<keyword id="KW-0813">Transport</keyword>
<evidence type="ECO:0000255" key="1">
    <source>
        <dbReference type="HAMAP-Rule" id="MF_00530"/>
    </source>
</evidence>
<gene>
    <name evidence="1" type="primary">atpE</name>
</gene>
<accession>Q06J28</accession>
<protein>
    <recommendedName>
        <fullName evidence="1">ATP synthase epsilon chain, chloroplastic</fullName>
    </recommendedName>
    <alternativeName>
        <fullName evidence="1">ATP synthase F1 sector epsilon subunit</fullName>
    </alternativeName>
    <alternativeName>
        <fullName evidence="1">F-ATPase epsilon subunit</fullName>
    </alternativeName>
</protein>
<reference key="1">
    <citation type="journal article" date="2007" name="Mol. Biol. Evol.">
        <title>The complete chloroplast genome of the chlorarachniophyte Bigelowiella natans: evidence for independent origins of chlorarachniophyte and euglenid secondary endosymbionts.</title>
        <authorList>
            <person name="Rogers M.B."/>
            <person name="Gilson P.R."/>
            <person name="Su V."/>
            <person name="McFadden G.I."/>
            <person name="Keeling P.J."/>
        </authorList>
    </citation>
    <scope>NUCLEOTIDE SEQUENCE [LARGE SCALE GENOMIC DNA]</scope>
</reference>
<name>ATPE_BIGNA</name>
<proteinExistence type="inferred from homology"/>
<organism>
    <name type="scientific">Bigelowiella natans</name>
    <name type="common">Pedinomonas minutissima</name>
    <name type="synonym">Chlorarachnion sp. (strain CCMP621)</name>
    <dbReference type="NCBI Taxonomy" id="227086"/>
    <lineage>
        <taxon>Eukaryota</taxon>
        <taxon>Sar</taxon>
        <taxon>Rhizaria</taxon>
        <taxon>Cercozoa</taxon>
        <taxon>Chlorarachniophyceae</taxon>
        <taxon>Bigelowiella</taxon>
    </lineage>
</organism>
<comment type="function">
    <text evidence="1">Produces ATP from ADP in the presence of a proton gradient across the membrane.</text>
</comment>
<comment type="subunit">
    <text evidence="1">F-type ATPases have 2 components, CF(1) - the catalytic core - and CF(0) - the membrane proton channel. CF(1) has five subunits: alpha(3), beta(3), gamma(1), delta(1), epsilon(1). CF(0) has three main subunits: a, b and c.</text>
</comment>
<comment type="subcellular location">
    <subcellularLocation>
        <location evidence="1">Plastid</location>
        <location evidence="1">Chloroplast thylakoid membrane</location>
        <topology evidence="1">Peripheral membrane protein</topology>
    </subcellularLocation>
</comment>
<comment type="similarity">
    <text evidence="1">Belongs to the ATPase epsilon chain family.</text>
</comment>
<geneLocation type="chloroplast"/>
<feature type="chain" id="PRO_0000295908" description="ATP synthase epsilon chain, chloroplastic">
    <location>
        <begin position="1"/>
        <end position="137"/>
    </location>
</feature>
<dbReference type="EMBL" id="DQ851108">
    <property type="protein sequence ID" value="ABG91431.1"/>
    <property type="molecule type" value="Genomic_DNA"/>
</dbReference>
<dbReference type="RefSeq" id="YP_778599.1">
    <property type="nucleotide sequence ID" value="NC_008408.1"/>
</dbReference>
<dbReference type="SMR" id="Q06J28"/>
<dbReference type="GeneID" id="4353016"/>
<dbReference type="GO" id="GO:0009535">
    <property type="term" value="C:chloroplast thylakoid membrane"/>
    <property type="evidence" value="ECO:0007669"/>
    <property type="project" value="UniProtKB-SubCell"/>
</dbReference>
<dbReference type="GO" id="GO:0045259">
    <property type="term" value="C:proton-transporting ATP synthase complex"/>
    <property type="evidence" value="ECO:0007669"/>
    <property type="project" value="UniProtKB-KW"/>
</dbReference>
<dbReference type="GO" id="GO:0005524">
    <property type="term" value="F:ATP binding"/>
    <property type="evidence" value="ECO:0007669"/>
    <property type="project" value="UniProtKB-UniRule"/>
</dbReference>
<dbReference type="GO" id="GO:0046933">
    <property type="term" value="F:proton-transporting ATP synthase activity, rotational mechanism"/>
    <property type="evidence" value="ECO:0007669"/>
    <property type="project" value="UniProtKB-UniRule"/>
</dbReference>
<dbReference type="CDD" id="cd12152">
    <property type="entry name" value="F1-ATPase_delta"/>
    <property type="match status" value="1"/>
</dbReference>
<dbReference type="Gene3D" id="2.60.15.10">
    <property type="entry name" value="F0F1 ATP synthase delta/epsilon subunit, N-terminal"/>
    <property type="match status" value="1"/>
</dbReference>
<dbReference type="HAMAP" id="MF_00530">
    <property type="entry name" value="ATP_synth_epsil_bac"/>
    <property type="match status" value="1"/>
</dbReference>
<dbReference type="InterPro" id="IPR001469">
    <property type="entry name" value="ATP_synth_F1_dsu/esu"/>
</dbReference>
<dbReference type="InterPro" id="IPR020546">
    <property type="entry name" value="ATP_synth_F1_dsu/esu_N"/>
</dbReference>
<dbReference type="InterPro" id="IPR036771">
    <property type="entry name" value="ATPsynth_dsu/esu_N"/>
</dbReference>
<dbReference type="NCBIfam" id="TIGR01216">
    <property type="entry name" value="ATP_synt_epsi"/>
    <property type="match status" value="1"/>
</dbReference>
<dbReference type="PANTHER" id="PTHR13822">
    <property type="entry name" value="ATP SYNTHASE DELTA/EPSILON CHAIN"/>
    <property type="match status" value="1"/>
</dbReference>
<dbReference type="PANTHER" id="PTHR13822:SF10">
    <property type="entry name" value="ATP SYNTHASE EPSILON CHAIN, CHLOROPLASTIC"/>
    <property type="match status" value="1"/>
</dbReference>
<dbReference type="Pfam" id="PF02823">
    <property type="entry name" value="ATP-synt_DE_N"/>
    <property type="match status" value="1"/>
</dbReference>
<dbReference type="SUPFAM" id="SSF51344">
    <property type="entry name" value="Epsilon subunit of F1F0-ATP synthase N-terminal domain"/>
    <property type="match status" value="1"/>
</dbReference>